<organism>
    <name type="scientific">Streptococcus pyogenes serotype M5 (strain Manfredo)</name>
    <dbReference type="NCBI Taxonomy" id="160491"/>
    <lineage>
        <taxon>Bacteria</taxon>
        <taxon>Bacillati</taxon>
        <taxon>Bacillota</taxon>
        <taxon>Bacilli</taxon>
        <taxon>Lactobacillales</taxon>
        <taxon>Streptococcaceae</taxon>
        <taxon>Streptococcus</taxon>
    </lineage>
</organism>
<sequence>MIKITFPDGAVREFESGVTTFDIAESISKSLAKKALAGKFNDQLIDTTRAIEEDGSIEIVTPDHKDAYEVLRHSAAHLFAQAAKRLFPNLHLGVGPAIAEGFYYDTDNAEGQISNEDLPRIEAEMQKIVTENYPCIREEVTKEEALELFKDDPYKVELINEHAGAGLTVYRQGEFVDLCRGPHVPSTGRIQVFHLLNVAGAYWRGNSDNNMMQRIYGTAWFDKKDLKAYLTRLEEAKERDHRKLGKELDLFMISQEVGQGLPFWLPDGATIRRTLERYITDKELASGYQHVYTPPLASVELYKTSGHWDHYQEDMFPVMDMGDGEEFVLRPMNCPHHIQVYKNHVRSYRELPIRIAELGMMHRYEKSGALSGLQRVREMTLNDGHIFVTPEQIQEEFQRALQLIIDVYADFNLTDYRFRLSYRDPNDTHKYYDNDEMWENAQSMLKAALDEMGVDYFEAEGEAAFYGPKLDIQVKTALGNEETLSTIQLDFLLPERFDLKYIGADGEEHRPVMIHRGVISTMERFTAILIETYKGAFPTWLAPHQVTVIPISNEAHIDYAWEVAKTLRDRGVRADVDDRNEKMQYKIRASQTSKIPYQLIVGDKEMEDKSVNVRRYGSKATHTESVEEFVENILADIARKSRPDAQA</sequence>
<evidence type="ECO:0000255" key="1">
    <source>
        <dbReference type="HAMAP-Rule" id="MF_00184"/>
    </source>
</evidence>
<evidence type="ECO:0000255" key="2">
    <source>
        <dbReference type="PROSITE-ProRule" id="PRU01228"/>
    </source>
</evidence>
<keyword id="KW-0030">Aminoacyl-tRNA synthetase</keyword>
<keyword id="KW-0067">ATP-binding</keyword>
<keyword id="KW-0963">Cytoplasm</keyword>
<keyword id="KW-0436">Ligase</keyword>
<keyword id="KW-0479">Metal-binding</keyword>
<keyword id="KW-0547">Nucleotide-binding</keyword>
<keyword id="KW-0648">Protein biosynthesis</keyword>
<keyword id="KW-0694">RNA-binding</keyword>
<keyword id="KW-0820">tRNA-binding</keyword>
<keyword id="KW-0862">Zinc</keyword>
<reference key="1">
    <citation type="journal article" date="2007" name="J. Bacteriol.">
        <title>Complete genome of acute rheumatic fever-associated serotype M5 Streptococcus pyogenes strain Manfredo.</title>
        <authorList>
            <person name="Holden M.T.G."/>
            <person name="Scott A."/>
            <person name="Cherevach I."/>
            <person name="Chillingworth T."/>
            <person name="Churcher C."/>
            <person name="Cronin A."/>
            <person name="Dowd L."/>
            <person name="Feltwell T."/>
            <person name="Hamlin N."/>
            <person name="Holroyd S."/>
            <person name="Jagels K."/>
            <person name="Moule S."/>
            <person name="Mungall K."/>
            <person name="Quail M.A."/>
            <person name="Price C."/>
            <person name="Rabbinowitsch E."/>
            <person name="Sharp S."/>
            <person name="Skelton J."/>
            <person name="Whitehead S."/>
            <person name="Barrell B.G."/>
            <person name="Kehoe M."/>
            <person name="Parkhill J."/>
        </authorList>
    </citation>
    <scope>NUCLEOTIDE SEQUENCE [LARGE SCALE GENOMIC DNA]</scope>
    <source>
        <strain>Manfredo</strain>
    </source>
</reference>
<comment type="function">
    <text evidence="1">Catalyzes the attachment of threonine to tRNA(Thr) in a two-step reaction: L-threonine is first activated by ATP to form Thr-AMP and then transferred to the acceptor end of tRNA(Thr). Also edits incorrectly charged L-seryl-tRNA(Thr).</text>
</comment>
<comment type="catalytic activity">
    <reaction evidence="1">
        <text>tRNA(Thr) + L-threonine + ATP = L-threonyl-tRNA(Thr) + AMP + diphosphate + H(+)</text>
        <dbReference type="Rhea" id="RHEA:24624"/>
        <dbReference type="Rhea" id="RHEA-COMP:9670"/>
        <dbReference type="Rhea" id="RHEA-COMP:9704"/>
        <dbReference type="ChEBI" id="CHEBI:15378"/>
        <dbReference type="ChEBI" id="CHEBI:30616"/>
        <dbReference type="ChEBI" id="CHEBI:33019"/>
        <dbReference type="ChEBI" id="CHEBI:57926"/>
        <dbReference type="ChEBI" id="CHEBI:78442"/>
        <dbReference type="ChEBI" id="CHEBI:78534"/>
        <dbReference type="ChEBI" id="CHEBI:456215"/>
        <dbReference type="EC" id="6.1.1.3"/>
    </reaction>
</comment>
<comment type="cofactor">
    <cofactor evidence="1">
        <name>Zn(2+)</name>
        <dbReference type="ChEBI" id="CHEBI:29105"/>
    </cofactor>
    <text evidence="1">Binds 1 zinc ion per subunit.</text>
</comment>
<comment type="subunit">
    <text evidence="1">Homodimer.</text>
</comment>
<comment type="subcellular location">
    <subcellularLocation>
        <location evidence="1">Cytoplasm</location>
    </subcellularLocation>
</comment>
<comment type="similarity">
    <text evidence="1">Belongs to the class-II aminoacyl-tRNA synthetase family.</text>
</comment>
<protein>
    <recommendedName>
        <fullName evidence="1">Threonine--tRNA ligase</fullName>
        <ecNumber evidence="1">6.1.1.3</ecNumber>
    </recommendedName>
    <alternativeName>
        <fullName evidence="1">Threonyl-tRNA synthetase</fullName>
        <shortName evidence="1">ThrRS</shortName>
    </alternativeName>
</protein>
<accession>A2RFY5</accession>
<dbReference type="EC" id="6.1.1.3" evidence="1"/>
<dbReference type="EMBL" id="AM295007">
    <property type="protein sequence ID" value="CAM30764.1"/>
    <property type="molecule type" value="Genomic_DNA"/>
</dbReference>
<dbReference type="RefSeq" id="WP_002985672.1">
    <property type="nucleotide sequence ID" value="NC_009332.1"/>
</dbReference>
<dbReference type="SMR" id="A2RFY5"/>
<dbReference type="KEGG" id="spf:SpyM51443"/>
<dbReference type="HOGENOM" id="CLU_008554_0_1_9"/>
<dbReference type="GO" id="GO:0005737">
    <property type="term" value="C:cytoplasm"/>
    <property type="evidence" value="ECO:0007669"/>
    <property type="project" value="UniProtKB-SubCell"/>
</dbReference>
<dbReference type="GO" id="GO:0005524">
    <property type="term" value="F:ATP binding"/>
    <property type="evidence" value="ECO:0007669"/>
    <property type="project" value="UniProtKB-UniRule"/>
</dbReference>
<dbReference type="GO" id="GO:0140096">
    <property type="term" value="F:catalytic activity, acting on a protein"/>
    <property type="evidence" value="ECO:0007669"/>
    <property type="project" value="UniProtKB-ARBA"/>
</dbReference>
<dbReference type="GO" id="GO:0046872">
    <property type="term" value="F:metal ion binding"/>
    <property type="evidence" value="ECO:0007669"/>
    <property type="project" value="UniProtKB-KW"/>
</dbReference>
<dbReference type="GO" id="GO:0004829">
    <property type="term" value="F:threonine-tRNA ligase activity"/>
    <property type="evidence" value="ECO:0007669"/>
    <property type="project" value="UniProtKB-UniRule"/>
</dbReference>
<dbReference type="GO" id="GO:0016740">
    <property type="term" value="F:transferase activity"/>
    <property type="evidence" value="ECO:0007669"/>
    <property type="project" value="UniProtKB-ARBA"/>
</dbReference>
<dbReference type="GO" id="GO:0000049">
    <property type="term" value="F:tRNA binding"/>
    <property type="evidence" value="ECO:0007669"/>
    <property type="project" value="UniProtKB-KW"/>
</dbReference>
<dbReference type="GO" id="GO:0006435">
    <property type="term" value="P:threonyl-tRNA aminoacylation"/>
    <property type="evidence" value="ECO:0007669"/>
    <property type="project" value="UniProtKB-UniRule"/>
</dbReference>
<dbReference type="CDD" id="cd01667">
    <property type="entry name" value="TGS_ThrRS"/>
    <property type="match status" value="1"/>
</dbReference>
<dbReference type="CDD" id="cd00860">
    <property type="entry name" value="ThrRS_anticodon"/>
    <property type="match status" value="1"/>
</dbReference>
<dbReference type="CDD" id="cd00771">
    <property type="entry name" value="ThrRS_core"/>
    <property type="match status" value="1"/>
</dbReference>
<dbReference type="FunFam" id="3.10.20.30:FF:000005">
    <property type="entry name" value="Threonine--tRNA ligase"/>
    <property type="match status" value="1"/>
</dbReference>
<dbReference type="FunFam" id="3.30.54.20:FF:000002">
    <property type="entry name" value="Threonine--tRNA ligase"/>
    <property type="match status" value="1"/>
</dbReference>
<dbReference type="FunFam" id="3.30.930.10:FF:000002">
    <property type="entry name" value="Threonine--tRNA ligase"/>
    <property type="match status" value="1"/>
</dbReference>
<dbReference type="FunFam" id="3.40.50.800:FF:000001">
    <property type="entry name" value="Threonine--tRNA ligase"/>
    <property type="match status" value="1"/>
</dbReference>
<dbReference type="FunFam" id="3.30.980.10:FF:000005">
    <property type="entry name" value="Threonyl-tRNA synthetase, mitochondrial"/>
    <property type="match status" value="1"/>
</dbReference>
<dbReference type="Gene3D" id="3.10.20.30">
    <property type="match status" value="1"/>
</dbReference>
<dbReference type="Gene3D" id="3.30.54.20">
    <property type="match status" value="1"/>
</dbReference>
<dbReference type="Gene3D" id="3.40.50.800">
    <property type="entry name" value="Anticodon-binding domain"/>
    <property type="match status" value="1"/>
</dbReference>
<dbReference type="Gene3D" id="3.30.930.10">
    <property type="entry name" value="Bira Bifunctional Protein, Domain 2"/>
    <property type="match status" value="1"/>
</dbReference>
<dbReference type="Gene3D" id="3.30.980.10">
    <property type="entry name" value="Threonyl-trna Synthetase, Chain A, domain 2"/>
    <property type="match status" value="1"/>
</dbReference>
<dbReference type="HAMAP" id="MF_00184">
    <property type="entry name" value="Thr_tRNA_synth"/>
    <property type="match status" value="1"/>
</dbReference>
<dbReference type="InterPro" id="IPR002314">
    <property type="entry name" value="aa-tRNA-synt_IIb"/>
</dbReference>
<dbReference type="InterPro" id="IPR006195">
    <property type="entry name" value="aa-tRNA-synth_II"/>
</dbReference>
<dbReference type="InterPro" id="IPR045864">
    <property type="entry name" value="aa-tRNA-synth_II/BPL/LPL"/>
</dbReference>
<dbReference type="InterPro" id="IPR004154">
    <property type="entry name" value="Anticodon-bd"/>
</dbReference>
<dbReference type="InterPro" id="IPR036621">
    <property type="entry name" value="Anticodon-bd_dom_sf"/>
</dbReference>
<dbReference type="InterPro" id="IPR012675">
    <property type="entry name" value="Beta-grasp_dom_sf"/>
</dbReference>
<dbReference type="InterPro" id="IPR004095">
    <property type="entry name" value="TGS"/>
</dbReference>
<dbReference type="InterPro" id="IPR012676">
    <property type="entry name" value="TGS-like"/>
</dbReference>
<dbReference type="InterPro" id="IPR002320">
    <property type="entry name" value="Thr-tRNA-ligase_IIa"/>
</dbReference>
<dbReference type="InterPro" id="IPR018163">
    <property type="entry name" value="Thr/Ala-tRNA-synth_IIc_edit"/>
</dbReference>
<dbReference type="InterPro" id="IPR047246">
    <property type="entry name" value="ThrRS_anticodon"/>
</dbReference>
<dbReference type="InterPro" id="IPR033728">
    <property type="entry name" value="ThrRS_core"/>
</dbReference>
<dbReference type="InterPro" id="IPR012947">
    <property type="entry name" value="tRNA_SAD"/>
</dbReference>
<dbReference type="NCBIfam" id="TIGR00418">
    <property type="entry name" value="thrS"/>
    <property type="match status" value="1"/>
</dbReference>
<dbReference type="PANTHER" id="PTHR11451:SF56">
    <property type="entry name" value="THREONINE--TRNA LIGASE 1"/>
    <property type="match status" value="1"/>
</dbReference>
<dbReference type="PANTHER" id="PTHR11451">
    <property type="entry name" value="THREONINE-TRNA LIGASE"/>
    <property type="match status" value="1"/>
</dbReference>
<dbReference type="Pfam" id="PF03129">
    <property type="entry name" value="HGTP_anticodon"/>
    <property type="match status" value="1"/>
</dbReference>
<dbReference type="Pfam" id="PF02824">
    <property type="entry name" value="TGS"/>
    <property type="match status" value="1"/>
</dbReference>
<dbReference type="Pfam" id="PF00587">
    <property type="entry name" value="tRNA-synt_2b"/>
    <property type="match status" value="1"/>
</dbReference>
<dbReference type="Pfam" id="PF07973">
    <property type="entry name" value="tRNA_SAD"/>
    <property type="match status" value="1"/>
</dbReference>
<dbReference type="PRINTS" id="PR01047">
    <property type="entry name" value="TRNASYNTHTHR"/>
</dbReference>
<dbReference type="SMART" id="SM00863">
    <property type="entry name" value="tRNA_SAD"/>
    <property type="match status" value="1"/>
</dbReference>
<dbReference type="SUPFAM" id="SSF52954">
    <property type="entry name" value="Class II aaRS ABD-related"/>
    <property type="match status" value="1"/>
</dbReference>
<dbReference type="SUPFAM" id="SSF55681">
    <property type="entry name" value="Class II aaRS and biotin synthetases"/>
    <property type="match status" value="1"/>
</dbReference>
<dbReference type="SUPFAM" id="SSF81271">
    <property type="entry name" value="TGS-like"/>
    <property type="match status" value="1"/>
</dbReference>
<dbReference type="SUPFAM" id="SSF55186">
    <property type="entry name" value="ThrRS/AlaRS common domain"/>
    <property type="match status" value="1"/>
</dbReference>
<dbReference type="PROSITE" id="PS50862">
    <property type="entry name" value="AA_TRNA_LIGASE_II"/>
    <property type="match status" value="1"/>
</dbReference>
<dbReference type="PROSITE" id="PS51880">
    <property type="entry name" value="TGS"/>
    <property type="match status" value="1"/>
</dbReference>
<gene>
    <name evidence="1" type="primary">thrS</name>
    <name type="ordered locus">SpyM51443</name>
</gene>
<feature type="chain" id="PRO_1000020531" description="Threonine--tRNA ligase">
    <location>
        <begin position="1"/>
        <end position="647"/>
    </location>
</feature>
<feature type="domain" description="TGS" evidence="2">
    <location>
        <begin position="1"/>
        <end position="61"/>
    </location>
</feature>
<feature type="region of interest" description="Catalytic" evidence="1">
    <location>
        <begin position="240"/>
        <end position="538"/>
    </location>
</feature>
<feature type="binding site" evidence="1">
    <location>
        <position position="334"/>
    </location>
    <ligand>
        <name>Zn(2+)</name>
        <dbReference type="ChEBI" id="CHEBI:29105"/>
    </ligand>
</feature>
<feature type="binding site" evidence="1">
    <location>
        <position position="385"/>
    </location>
    <ligand>
        <name>Zn(2+)</name>
        <dbReference type="ChEBI" id="CHEBI:29105"/>
    </ligand>
</feature>
<feature type="binding site" evidence="1">
    <location>
        <position position="515"/>
    </location>
    <ligand>
        <name>Zn(2+)</name>
        <dbReference type="ChEBI" id="CHEBI:29105"/>
    </ligand>
</feature>
<proteinExistence type="inferred from homology"/>
<name>SYT_STRPG</name>